<reference key="1">
    <citation type="journal article" date="2009" name="PLoS ONE">
        <title>Genome analysis of the anaerobic thermohalophilic bacterium Halothermothrix orenii.</title>
        <authorList>
            <person name="Mavromatis K."/>
            <person name="Ivanova N."/>
            <person name="Anderson I."/>
            <person name="Lykidis A."/>
            <person name="Hooper S.D."/>
            <person name="Sun H."/>
            <person name="Kunin V."/>
            <person name="Lapidus A."/>
            <person name="Hugenholtz P."/>
            <person name="Patel B."/>
            <person name="Kyrpides N.C."/>
        </authorList>
    </citation>
    <scope>NUCLEOTIDE SEQUENCE [LARGE SCALE GENOMIC DNA]</scope>
    <source>
        <strain>H 168 / OCM 544 / DSM 9562</strain>
    </source>
</reference>
<gene>
    <name evidence="1" type="primary">rbfA</name>
    <name type="ordered locus">Hore_07850</name>
</gene>
<sequence>MKRQRARRLGELLKKEISDIILREVKDPRIGFISVTDVEVSNDLRHAKVFVSVYGDEKERKETMEGLEKATGYIRKLIGERVKVYYTPEILFRYDDSLEHGARINELLKKVKEEEESDREEG</sequence>
<dbReference type="EMBL" id="CP001098">
    <property type="protein sequence ID" value="ACL69542.1"/>
    <property type="molecule type" value="Genomic_DNA"/>
</dbReference>
<dbReference type="RefSeq" id="WP_012635730.1">
    <property type="nucleotide sequence ID" value="NC_011899.1"/>
</dbReference>
<dbReference type="SMR" id="B8CW73"/>
<dbReference type="STRING" id="373903.Hore_07850"/>
<dbReference type="KEGG" id="hor:Hore_07850"/>
<dbReference type="eggNOG" id="COG0858">
    <property type="taxonomic scope" value="Bacteria"/>
</dbReference>
<dbReference type="HOGENOM" id="CLU_089475_6_3_9"/>
<dbReference type="OrthoDB" id="307788at2"/>
<dbReference type="Proteomes" id="UP000000719">
    <property type="component" value="Chromosome"/>
</dbReference>
<dbReference type="GO" id="GO:0005829">
    <property type="term" value="C:cytosol"/>
    <property type="evidence" value="ECO:0007669"/>
    <property type="project" value="TreeGrafter"/>
</dbReference>
<dbReference type="GO" id="GO:0043024">
    <property type="term" value="F:ribosomal small subunit binding"/>
    <property type="evidence" value="ECO:0007669"/>
    <property type="project" value="TreeGrafter"/>
</dbReference>
<dbReference type="GO" id="GO:0030490">
    <property type="term" value="P:maturation of SSU-rRNA"/>
    <property type="evidence" value="ECO:0007669"/>
    <property type="project" value="UniProtKB-UniRule"/>
</dbReference>
<dbReference type="FunFam" id="3.30.300.20:FF:000009">
    <property type="entry name" value="Ribosome-binding factor A"/>
    <property type="match status" value="1"/>
</dbReference>
<dbReference type="Gene3D" id="3.30.300.20">
    <property type="match status" value="1"/>
</dbReference>
<dbReference type="HAMAP" id="MF_00003">
    <property type="entry name" value="RbfA"/>
    <property type="match status" value="1"/>
</dbReference>
<dbReference type="InterPro" id="IPR015946">
    <property type="entry name" value="KH_dom-like_a/b"/>
</dbReference>
<dbReference type="InterPro" id="IPR000238">
    <property type="entry name" value="RbfA"/>
</dbReference>
<dbReference type="InterPro" id="IPR023799">
    <property type="entry name" value="RbfA_dom_sf"/>
</dbReference>
<dbReference type="InterPro" id="IPR020053">
    <property type="entry name" value="Ribosome-bd_factorA_CS"/>
</dbReference>
<dbReference type="NCBIfam" id="TIGR00082">
    <property type="entry name" value="rbfA"/>
    <property type="match status" value="1"/>
</dbReference>
<dbReference type="PANTHER" id="PTHR33515">
    <property type="entry name" value="RIBOSOME-BINDING FACTOR A, CHLOROPLASTIC-RELATED"/>
    <property type="match status" value="1"/>
</dbReference>
<dbReference type="PANTHER" id="PTHR33515:SF1">
    <property type="entry name" value="RIBOSOME-BINDING FACTOR A, CHLOROPLASTIC-RELATED"/>
    <property type="match status" value="1"/>
</dbReference>
<dbReference type="Pfam" id="PF02033">
    <property type="entry name" value="RBFA"/>
    <property type="match status" value="1"/>
</dbReference>
<dbReference type="SUPFAM" id="SSF89919">
    <property type="entry name" value="Ribosome-binding factor A, RbfA"/>
    <property type="match status" value="1"/>
</dbReference>
<dbReference type="PROSITE" id="PS01319">
    <property type="entry name" value="RBFA"/>
    <property type="match status" value="1"/>
</dbReference>
<proteinExistence type="inferred from homology"/>
<accession>B8CW73</accession>
<protein>
    <recommendedName>
        <fullName evidence="1">Ribosome-binding factor A</fullName>
    </recommendedName>
</protein>
<evidence type="ECO:0000255" key="1">
    <source>
        <dbReference type="HAMAP-Rule" id="MF_00003"/>
    </source>
</evidence>
<organism>
    <name type="scientific">Halothermothrix orenii (strain H 168 / OCM 544 / DSM 9562)</name>
    <dbReference type="NCBI Taxonomy" id="373903"/>
    <lineage>
        <taxon>Bacteria</taxon>
        <taxon>Bacillati</taxon>
        <taxon>Bacillota</taxon>
        <taxon>Clostridia</taxon>
        <taxon>Halanaerobiales</taxon>
        <taxon>Halothermotrichaceae</taxon>
        <taxon>Halothermothrix</taxon>
    </lineage>
</organism>
<name>RBFA_HALOH</name>
<feature type="chain" id="PRO_1000193263" description="Ribosome-binding factor A">
    <location>
        <begin position="1"/>
        <end position="122"/>
    </location>
</feature>
<comment type="function">
    <text evidence="1">One of several proteins that assist in the late maturation steps of the functional core of the 30S ribosomal subunit. Associates with free 30S ribosomal subunits (but not with 30S subunits that are part of 70S ribosomes or polysomes). Required for efficient processing of 16S rRNA. May interact with the 5'-terminal helix region of 16S rRNA.</text>
</comment>
<comment type="subunit">
    <text evidence="1">Monomer. Binds 30S ribosomal subunits, but not 50S ribosomal subunits or 70S ribosomes.</text>
</comment>
<comment type="subcellular location">
    <subcellularLocation>
        <location evidence="1">Cytoplasm</location>
    </subcellularLocation>
</comment>
<comment type="similarity">
    <text evidence="1">Belongs to the RbfA family.</text>
</comment>
<keyword id="KW-0963">Cytoplasm</keyword>
<keyword id="KW-1185">Reference proteome</keyword>
<keyword id="KW-0690">Ribosome biogenesis</keyword>